<evidence type="ECO:0000250" key="1">
    <source>
        <dbReference type="UniProtKB" id="Q53WK1"/>
    </source>
</evidence>
<evidence type="ECO:0000250" key="2">
    <source>
        <dbReference type="UniProtKB" id="Q9ES89"/>
    </source>
</evidence>
<evidence type="ECO:0000255" key="3"/>
<evidence type="ECO:0000305" key="4"/>
<evidence type="ECO:0000312" key="5">
    <source>
        <dbReference type="EMBL" id="EAY98857.1"/>
    </source>
</evidence>
<reference key="1">
    <citation type="journal article" date="2005" name="PLoS Biol.">
        <title>The genomes of Oryza sativa: a history of duplications.</title>
        <authorList>
            <person name="Yu J."/>
            <person name="Wang J."/>
            <person name="Lin W."/>
            <person name="Li S."/>
            <person name="Li H."/>
            <person name="Zhou J."/>
            <person name="Ni P."/>
            <person name="Dong W."/>
            <person name="Hu S."/>
            <person name="Zeng C."/>
            <person name="Zhang J."/>
            <person name="Zhang Y."/>
            <person name="Li R."/>
            <person name="Xu Z."/>
            <person name="Li S."/>
            <person name="Li X."/>
            <person name="Zheng H."/>
            <person name="Cong L."/>
            <person name="Lin L."/>
            <person name="Yin J."/>
            <person name="Geng J."/>
            <person name="Li G."/>
            <person name="Shi J."/>
            <person name="Liu J."/>
            <person name="Lv H."/>
            <person name="Li J."/>
            <person name="Wang J."/>
            <person name="Deng Y."/>
            <person name="Ran L."/>
            <person name="Shi X."/>
            <person name="Wang X."/>
            <person name="Wu Q."/>
            <person name="Li C."/>
            <person name="Ren X."/>
            <person name="Wang J."/>
            <person name="Wang X."/>
            <person name="Li D."/>
            <person name="Liu D."/>
            <person name="Zhang X."/>
            <person name="Ji Z."/>
            <person name="Zhao W."/>
            <person name="Sun Y."/>
            <person name="Zhang Z."/>
            <person name="Bao J."/>
            <person name="Han Y."/>
            <person name="Dong L."/>
            <person name="Ji J."/>
            <person name="Chen P."/>
            <person name="Wu S."/>
            <person name="Liu J."/>
            <person name="Xiao Y."/>
            <person name="Bu D."/>
            <person name="Tan J."/>
            <person name="Yang L."/>
            <person name="Ye C."/>
            <person name="Zhang J."/>
            <person name="Xu J."/>
            <person name="Zhou Y."/>
            <person name="Yu Y."/>
            <person name="Zhang B."/>
            <person name="Zhuang S."/>
            <person name="Wei H."/>
            <person name="Liu B."/>
            <person name="Lei M."/>
            <person name="Yu H."/>
            <person name="Li Y."/>
            <person name="Xu H."/>
            <person name="Wei S."/>
            <person name="He X."/>
            <person name="Fang L."/>
            <person name="Zhang Z."/>
            <person name="Zhang Y."/>
            <person name="Huang X."/>
            <person name="Su Z."/>
            <person name="Tong W."/>
            <person name="Li J."/>
            <person name="Tong Z."/>
            <person name="Li S."/>
            <person name="Ye J."/>
            <person name="Wang L."/>
            <person name="Fang L."/>
            <person name="Lei T."/>
            <person name="Chen C.-S."/>
            <person name="Chen H.-C."/>
            <person name="Xu Z."/>
            <person name="Li H."/>
            <person name="Huang H."/>
            <person name="Zhang F."/>
            <person name="Xu H."/>
            <person name="Li N."/>
            <person name="Zhao C."/>
            <person name="Li S."/>
            <person name="Dong L."/>
            <person name="Huang Y."/>
            <person name="Li L."/>
            <person name="Xi Y."/>
            <person name="Qi Q."/>
            <person name="Li W."/>
            <person name="Zhang B."/>
            <person name="Hu W."/>
            <person name="Zhang Y."/>
            <person name="Tian X."/>
            <person name="Jiao Y."/>
            <person name="Liang X."/>
            <person name="Jin J."/>
            <person name="Gao L."/>
            <person name="Zheng W."/>
            <person name="Hao B."/>
            <person name="Liu S.-M."/>
            <person name="Wang W."/>
            <person name="Yuan L."/>
            <person name="Cao M."/>
            <person name="McDermott J."/>
            <person name="Samudrala R."/>
            <person name="Wang J."/>
            <person name="Wong G.K.-S."/>
            <person name="Yang H."/>
        </authorList>
    </citation>
    <scope>NUCLEOTIDE SEQUENCE [LARGE SCALE GENOMIC DNA]</scope>
    <source>
        <strain>cv. 93-11</strain>
        <strain>cv. Guang-Lu-Ai No.4</strain>
    </source>
</reference>
<organism>
    <name type="scientific">Oryza sativa subsp. indica</name>
    <name type="common">Rice</name>
    <dbReference type="NCBI Taxonomy" id="39946"/>
    <lineage>
        <taxon>Eukaryota</taxon>
        <taxon>Viridiplantae</taxon>
        <taxon>Streptophyta</taxon>
        <taxon>Embryophyta</taxon>
        <taxon>Tracheophyta</taxon>
        <taxon>Spermatophyta</taxon>
        <taxon>Magnoliopsida</taxon>
        <taxon>Liliopsida</taxon>
        <taxon>Poales</taxon>
        <taxon>Poaceae</taxon>
        <taxon>BOP clade</taxon>
        <taxon>Oryzoideae</taxon>
        <taxon>Oryzeae</taxon>
        <taxon>Oryzinae</taxon>
        <taxon>Oryza</taxon>
        <taxon>Oryza sativa</taxon>
    </lineage>
</organism>
<dbReference type="EC" id="2.4.99.-" evidence="4"/>
<dbReference type="EMBL" id="CM000130">
    <property type="protein sequence ID" value="EAY98857.1"/>
    <property type="molecule type" value="Genomic_DNA"/>
</dbReference>
<dbReference type="SMR" id="A2Y6Z7"/>
<dbReference type="STRING" id="39946.A2Y6Z7"/>
<dbReference type="EnsemblPlants" id="BGIOSGA020279-TA">
    <property type="protein sequence ID" value="BGIOSGA020279-PA"/>
    <property type="gene ID" value="BGIOSGA020279"/>
</dbReference>
<dbReference type="EnsemblPlants" id="OsLaMu_05g0025010.01">
    <property type="protein sequence ID" value="OsLaMu_05g0025010.01"/>
    <property type="gene ID" value="OsLaMu_05g0025010"/>
</dbReference>
<dbReference type="EnsemblPlants" id="OsZS97_05G025200_01">
    <property type="protein sequence ID" value="OsZS97_05G025200_01"/>
    <property type="gene ID" value="OsZS97_05G025200"/>
</dbReference>
<dbReference type="Gramene" id="BGIOSGA020279-TA">
    <property type="protein sequence ID" value="BGIOSGA020279-PA"/>
    <property type="gene ID" value="BGIOSGA020279"/>
</dbReference>
<dbReference type="Gramene" id="OsLaMu_05g0025010.01">
    <property type="protein sequence ID" value="OsLaMu_05g0025010.01"/>
    <property type="gene ID" value="OsLaMu_05g0025010"/>
</dbReference>
<dbReference type="Gramene" id="OsZS97_05G025200_01">
    <property type="protein sequence ID" value="OsZS97_05G025200_01"/>
    <property type="gene ID" value="OsZS97_05G025200"/>
</dbReference>
<dbReference type="HOGENOM" id="CLU_010984_0_0_1"/>
<dbReference type="OMA" id="GIVNVCI"/>
<dbReference type="Proteomes" id="UP000007015">
    <property type="component" value="Chromosome 5"/>
</dbReference>
<dbReference type="GO" id="GO:0016020">
    <property type="term" value="C:membrane"/>
    <property type="evidence" value="ECO:0007669"/>
    <property type="project" value="UniProtKB-SubCell"/>
</dbReference>
<dbReference type="GO" id="GO:0016757">
    <property type="term" value="F:glycosyltransferase activity"/>
    <property type="evidence" value="ECO:0007669"/>
    <property type="project" value="EnsemblPlants"/>
</dbReference>
<dbReference type="GO" id="GO:0046872">
    <property type="term" value="F:metal ion binding"/>
    <property type="evidence" value="ECO:0007669"/>
    <property type="project" value="UniProtKB-KW"/>
</dbReference>
<dbReference type="GO" id="GO:0030259">
    <property type="term" value="P:lipid glycosylation"/>
    <property type="evidence" value="ECO:0007669"/>
    <property type="project" value="EnsemblPlants"/>
</dbReference>
<dbReference type="GO" id="GO:0006486">
    <property type="term" value="P:protein glycosylation"/>
    <property type="evidence" value="ECO:0007669"/>
    <property type="project" value="InterPro"/>
</dbReference>
<dbReference type="FunFam" id="2.115.10.20:FF:000004">
    <property type="entry name" value="Glucosamine inositolphosphorylceramide transferase 1"/>
    <property type="match status" value="1"/>
</dbReference>
<dbReference type="FunFam" id="3.90.550.10:FF:000095">
    <property type="entry name" value="Glycosyltransferase family protein 64 protein C5"/>
    <property type="match status" value="1"/>
</dbReference>
<dbReference type="Gene3D" id="2.115.10.20">
    <property type="entry name" value="Glycosyl hydrolase domain, family 43"/>
    <property type="match status" value="1"/>
</dbReference>
<dbReference type="Gene3D" id="3.90.550.10">
    <property type="entry name" value="Spore Coat Polysaccharide Biosynthesis Protein SpsA, Chain A"/>
    <property type="match status" value="1"/>
</dbReference>
<dbReference type="InterPro" id="IPR004263">
    <property type="entry name" value="Exostosin"/>
</dbReference>
<dbReference type="InterPro" id="IPR056442">
    <property type="entry name" value="GINT1_N"/>
</dbReference>
<dbReference type="InterPro" id="IPR023296">
    <property type="entry name" value="Glyco_hydro_beta-prop_sf"/>
</dbReference>
<dbReference type="InterPro" id="IPR015338">
    <property type="entry name" value="GT64_dom"/>
</dbReference>
<dbReference type="InterPro" id="IPR029044">
    <property type="entry name" value="Nucleotide-diphossugar_trans"/>
</dbReference>
<dbReference type="PANTHER" id="PTHR48261">
    <property type="entry name" value="ACETYLGLUCOSAMINYLTRANSFERASE"/>
    <property type="match status" value="1"/>
</dbReference>
<dbReference type="PANTHER" id="PTHR48261:SF6">
    <property type="entry name" value="GLYCOSYLTRANSFERASE FAMILY PROTEIN"/>
    <property type="match status" value="1"/>
</dbReference>
<dbReference type="Pfam" id="PF24793">
    <property type="entry name" value="GINT1_N"/>
    <property type="match status" value="1"/>
</dbReference>
<dbReference type="Pfam" id="PF09258">
    <property type="entry name" value="Glyco_transf_64"/>
    <property type="match status" value="1"/>
</dbReference>
<dbReference type="SUPFAM" id="SSF75005">
    <property type="entry name" value="Arabinanase/levansucrase/invertase"/>
    <property type="match status" value="1"/>
</dbReference>
<dbReference type="SUPFAM" id="SSF53448">
    <property type="entry name" value="Nucleotide-diphospho-sugar transferases"/>
    <property type="match status" value="1"/>
</dbReference>
<comment type="function">
    <text evidence="1">Essential protein. Glycosyltransferase that mediates the glycosylation of glycosylinositol phosphorylceramides (GIPCs), the major sphingolipids in the plasma membrane; acts as a HexN(Ac)-specific GIPC sugar transferase. Responsible for the glycosylation of a subgroup of GIPCs found in seeds and pollen that contain GlcNAc and GlcN (GlcN(Ac)). Maybe involved in the maintenance of cell-cell adhesion.</text>
</comment>
<comment type="cofactor">
    <cofactor evidence="2">
        <name>Mn(2+)</name>
        <dbReference type="ChEBI" id="CHEBI:29035"/>
    </cofactor>
</comment>
<comment type="pathway">
    <text evidence="1">Sphingolipid metabolism.</text>
</comment>
<comment type="subcellular location">
    <subcellularLocation>
        <location evidence="3">Membrane</location>
        <topology evidence="3">Multi-pass membrane protein</topology>
    </subcellularLocation>
</comment>
<comment type="similarity">
    <text evidence="4">Belongs to the glycosyltransferase 64 family.</text>
</comment>
<protein>
    <recommendedName>
        <fullName evidence="4">Glucosamine inositolphosphorylceramide transferase 1</fullName>
        <ecNumber evidence="4">2.4.99.-</ecNumber>
    </recommendedName>
</protein>
<gene>
    <name evidence="4" type="primary">GINT1</name>
    <name evidence="5" type="ORF">OsI_20805</name>
</gene>
<feature type="chain" id="PRO_0000445781" description="Glucosamine inositolphosphorylceramide transferase 1">
    <location>
        <begin position="1"/>
        <end position="744"/>
    </location>
</feature>
<feature type="transmembrane region" description="Helical; Name=1" evidence="3">
    <location>
        <begin position="31"/>
        <end position="51"/>
    </location>
</feature>
<feature type="transmembrane region" description="Helical; Name=2" evidence="3">
    <location>
        <begin position="378"/>
        <end position="398"/>
    </location>
</feature>
<feature type="transmembrane region" description="Helical; Name=3" evidence="3">
    <location>
        <begin position="460"/>
        <end position="480"/>
    </location>
</feature>
<feature type="active site" evidence="2">
    <location>
        <position position="669"/>
    </location>
</feature>
<feature type="binding site" evidence="2">
    <location>
        <position position="534"/>
    </location>
    <ligand>
        <name>substrate</name>
    </ligand>
</feature>
<feature type="binding site" evidence="2">
    <location>
        <begin position="558"/>
        <end position="563"/>
    </location>
    <ligand>
        <name>substrate</name>
    </ligand>
</feature>
<feature type="binding site" evidence="2">
    <location>
        <begin position="579"/>
        <end position="581"/>
    </location>
    <ligand>
        <name>substrate</name>
    </ligand>
</feature>
<feature type="binding site" evidence="2">
    <location>
        <position position="581"/>
    </location>
    <ligand>
        <name>Mn(2+)</name>
        <dbReference type="ChEBI" id="CHEBI:29035"/>
        <note>catalytic</note>
    </ligand>
</feature>
<feature type="binding site" evidence="2">
    <location>
        <position position="609"/>
    </location>
    <ligand>
        <name>substrate</name>
    </ligand>
</feature>
<feature type="binding site" evidence="2">
    <location>
        <begin position="665"/>
        <end position="669"/>
    </location>
    <ligand>
        <name>substrate</name>
    </ligand>
</feature>
<feature type="disulfide bond" evidence="2">
    <location>
        <begin position="667"/>
        <end position="718"/>
    </location>
</feature>
<name>GINT1_ORYSI</name>
<keyword id="KW-1015">Disulfide bond</keyword>
<keyword id="KW-0464">Manganese</keyword>
<keyword id="KW-0472">Membrane</keyword>
<keyword id="KW-0479">Metal-binding</keyword>
<keyword id="KW-1185">Reference proteome</keyword>
<keyword id="KW-0808">Transferase</keyword>
<keyword id="KW-0812">Transmembrane</keyword>
<keyword id="KW-1133">Transmembrane helix</keyword>
<proteinExistence type="inferred from homology"/>
<accession>A2Y6Z7</accession>
<sequence>MAGRRAMRPSGSSMRGVVARLAAARSPAVSFLVAAAAGAALVGGVYFWLVVSSFRLPDSRAVGCLPDGEGSWAIGMYYGKSPLELRPIELEGRSNGNSSAWPVANPVLTCATPTEGGYPSNFVADPFLYVQGDTLFLFFETKTVSTMQGDIGVARSLDQGATWEFLGIALDEAWHLSYPFVFKYENEIYMMPEGNKKKELRLYRATKFPLEWTLEKVLIDKPLIDSSLVQYDGLWWLFASDFTRHGIEKNAELEIRYSNSPLGPWSEHKQNPIYRSDKSLGARNGGRLFIFEGSLYRPGQDCSGTYGRKVKLYKIEKLTKEEYKEVPVNLGIEEAKKGRNAWNGMRYHHIDAQQLASGGWVAVMDGDRVPSGDSTRRSLFGYMGFLVAVALVTFVGFVKGAISCYIPPSFWVPLTRRSELSRILPVHRFNLKIRRYSTSIGRNISATKARLSEKTWSNTLFFCVIALIGIVNVCIAVHFLLGGNGAEEAYTHQGQHSQFTMVTMTYEARLWNLKLFVEHYSRCESVREIVVVWNKGNHPTSDAFDSTVPVRIRVEEINSLNNRFRGDPLIKTRAVLELDDDIMMTCSDVEKGFKVWREHPERMVGFYPRMIDGDPLQYRNERYARGKKGYNLILTGAAFMDSEFAFSKYWSQEAKEGRDYVHKNFNCEDLLMNFLYANASSSRTVEYVHPAWAIDTSKLSSVAISRDTQKHYDIRTKCLAKFASIYGPLPQKWLFGMREDGWDK</sequence>